<keyword id="KW-0175">Coiled coil</keyword>
<keyword id="KW-1015">Disulfide bond</keyword>
<keyword id="KW-1185">Reference proteome</keyword>
<keyword id="KW-0964">Secreted</keyword>
<keyword id="KW-0732">Signal</keyword>
<sequence>MWDYKHFLLLSLAFTSTVTALSKVLGDTDQVRMTSEGSDCRCKCIMRPLSKEACSRVKGGNMRVEDYYTVETVSSGSDCKCSCTAPPSSLNPCENEWKMEKMKKQAPELFKLQSMVDLLEGTLYSMDLMKVHSYINKVVSQMNTLEETIKTNLTRENDFMKESVVNLSNQMKKYENYSEIMLSIKKEISNLGYQLLQKDAPENKAQDTAGVKGLAKFPNNKKNEGDKSLSKVTKDKPPKAEKPKKEVSKTKQVPPQPTPRPRSPVLQPVVIRGVTYYKAGRQEDAENAAGNRESVVKGPHRGAKQEIRTEGNITEPYLIREERIVATQRATPTPTPTTTPTTTQSTTTTTTTRTTISTATEYPLTTLSSTVLGAEAETNKVREGECEGTIASVEQPKKQHSYGRNEGAWMKDPIAKDGRIYVTNYYYGNNLVEFRNLDNFKQGRWSNLYKVPYNWIGTGHVVFQGAFYYNRAFTKNIIKYDLKQRFVAAWTLLHDVVYEDTTPWKWRGHSDIDFAVDESGLWVIYPSVDYDYSQQEVIVISKLDPNDLSIKKETTWKTGLKRNSYGNCFIICGILYAVDVYNQKEGMISYAYDTHTDTEADPKLPFINEYAFTTQIDYNPKEKVLYAWDNGHQLTYKVNFVA</sequence>
<name>OLM2A_XENTR</name>
<protein>
    <recommendedName>
        <fullName>Olfactomedin-like protein 2A</fullName>
    </recommendedName>
</protein>
<comment type="subunit">
    <text evidence="1">Homodimer.</text>
</comment>
<comment type="subcellular location">
    <subcellularLocation>
        <location evidence="1">Secreted</location>
    </subcellularLocation>
</comment>
<feature type="signal peptide" evidence="2">
    <location>
        <begin position="1"/>
        <end position="20"/>
    </location>
</feature>
<feature type="chain" id="PRO_0000311431" description="Olfactomedin-like protein 2A">
    <location>
        <begin position="21"/>
        <end position="642"/>
    </location>
</feature>
<feature type="domain" description="Olfactomedin-like" evidence="3">
    <location>
        <begin position="385"/>
        <end position="642"/>
    </location>
</feature>
<feature type="region of interest" description="Disordered" evidence="4">
    <location>
        <begin position="211"/>
        <end position="265"/>
    </location>
</feature>
<feature type="region of interest" description="Disordered" evidence="4">
    <location>
        <begin position="285"/>
        <end position="304"/>
    </location>
</feature>
<feature type="region of interest" description="Disordered" evidence="4">
    <location>
        <begin position="330"/>
        <end position="353"/>
    </location>
</feature>
<feature type="coiled-coil region" evidence="2">
    <location>
        <begin position="150"/>
        <end position="176"/>
    </location>
</feature>
<feature type="compositionally biased region" description="Basic and acidic residues" evidence="4">
    <location>
        <begin position="221"/>
        <end position="249"/>
    </location>
</feature>
<feature type="disulfide bond" evidence="3">
    <location>
        <begin position="386"/>
        <end position="572"/>
    </location>
</feature>
<accession>A4IIT5</accession>
<organism>
    <name type="scientific">Xenopus tropicalis</name>
    <name type="common">Western clawed frog</name>
    <name type="synonym">Silurana tropicalis</name>
    <dbReference type="NCBI Taxonomy" id="8364"/>
    <lineage>
        <taxon>Eukaryota</taxon>
        <taxon>Metazoa</taxon>
        <taxon>Chordata</taxon>
        <taxon>Craniata</taxon>
        <taxon>Vertebrata</taxon>
        <taxon>Euteleostomi</taxon>
        <taxon>Amphibia</taxon>
        <taxon>Batrachia</taxon>
        <taxon>Anura</taxon>
        <taxon>Pipoidea</taxon>
        <taxon>Pipidae</taxon>
        <taxon>Xenopodinae</taxon>
        <taxon>Xenopus</taxon>
        <taxon>Silurana</taxon>
    </lineage>
</organism>
<dbReference type="EMBL" id="BC136146">
    <property type="protein sequence ID" value="AAI36147.1"/>
    <property type="molecule type" value="mRNA"/>
</dbReference>
<dbReference type="RefSeq" id="NP_001096445.1">
    <property type="nucleotide sequence ID" value="NM_001102975.1"/>
</dbReference>
<dbReference type="SMR" id="A4IIT5"/>
<dbReference type="FunCoup" id="A4IIT5">
    <property type="interactions" value="217"/>
</dbReference>
<dbReference type="PaxDb" id="8364-ENSXETP00000018762"/>
<dbReference type="GeneID" id="100125057"/>
<dbReference type="KEGG" id="xtr:100125057"/>
<dbReference type="AGR" id="Xenbase:XB-GENE-996424"/>
<dbReference type="CTD" id="169611"/>
<dbReference type="Xenbase" id="XB-GENE-996424">
    <property type="gene designation" value="olfml2a"/>
</dbReference>
<dbReference type="eggNOG" id="KOG3545">
    <property type="taxonomic scope" value="Eukaryota"/>
</dbReference>
<dbReference type="InParanoid" id="A4IIT5"/>
<dbReference type="OMA" id="KGTNKYG"/>
<dbReference type="OrthoDB" id="8626508at2759"/>
<dbReference type="Proteomes" id="UP000008143">
    <property type="component" value="Chromosome 8"/>
</dbReference>
<dbReference type="GO" id="GO:0005576">
    <property type="term" value="C:extracellular region"/>
    <property type="evidence" value="ECO:0007669"/>
    <property type="project" value="UniProtKB-SubCell"/>
</dbReference>
<dbReference type="InterPro" id="IPR003112">
    <property type="entry name" value="Olfac-like_dom"/>
</dbReference>
<dbReference type="InterPro" id="IPR050605">
    <property type="entry name" value="Olfactomedin-like_domain"/>
</dbReference>
<dbReference type="PANTHER" id="PTHR23192:SF29">
    <property type="entry name" value="OLFACTOMEDIN-LIKE PROTEIN 2A"/>
    <property type="match status" value="1"/>
</dbReference>
<dbReference type="PANTHER" id="PTHR23192">
    <property type="entry name" value="OLFACTOMEDIN-RELATED"/>
    <property type="match status" value="1"/>
</dbReference>
<dbReference type="Pfam" id="PF02191">
    <property type="entry name" value="OLF"/>
    <property type="match status" value="1"/>
</dbReference>
<dbReference type="SMART" id="SM00284">
    <property type="entry name" value="OLF"/>
    <property type="match status" value="1"/>
</dbReference>
<dbReference type="PROSITE" id="PS51132">
    <property type="entry name" value="OLF"/>
    <property type="match status" value="1"/>
</dbReference>
<evidence type="ECO:0000250" key="1">
    <source>
        <dbReference type="UniProtKB" id="Q8BHP7"/>
    </source>
</evidence>
<evidence type="ECO:0000255" key="2"/>
<evidence type="ECO:0000255" key="3">
    <source>
        <dbReference type="PROSITE-ProRule" id="PRU00446"/>
    </source>
</evidence>
<evidence type="ECO:0000256" key="4">
    <source>
        <dbReference type="SAM" id="MobiDB-lite"/>
    </source>
</evidence>
<reference key="1">
    <citation type="submission" date="2007-03" db="EMBL/GenBank/DDBJ databases">
        <authorList>
            <consortium name="NIH - Xenopus Gene Collection (XGC) project"/>
        </authorList>
    </citation>
    <scope>NUCLEOTIDE SEQUENCE [LARGE SCALE MRNA]</scope>
    <source>
        <tissue>Brain</tissue>
    </source>
</reference>
<proteinExistence type="evidence at transcript level"/>
<gene>
    <name type="primary">olfml2a</name>
</gene>